<proteinExistence type="inferred from homology"/>
<protein>
    <recommendedName>
        <fullName>Glucans biosynthesis protein G</fullName>
    </recommendedName>
</protein>
<reference key="1">
    <citation type="journal article" date="2000" name="Nature">
        <title>DNA sequence of both chromosomes of the cholera pathogen Vibrio cholerae.</title>
        <authorList>
            <person name="Heidelberg J.F."/>
            <person name="Eisen J.A."/>
            <person name="Nelson W.C."/>
            <person name="Clayton R.A."/>
            <person name="Gwinn M.L."/>
            <person name="Dodson R.J."/>
            <person name="Haft D.H."/>
            <person name="Hickey E.K."/>
            <person name="Peterson J.D."/>
            <person name="Umayam L.A."/>
            <person name="Gill S.R."/>
            <person name="Nelson K.E."/>
            <person name="Read T.D."/>
            <person name="Tettelin H."/>
            <person name="Richardson D.L."/>
            <person name="Ermolaeva M.D."/>
            <person name="Vamathevan J.J."/>
            <person name="Bass S."/>
            <person name="Qin H."/>
            <person name="Dragoi I."/>
            <person name="Sellers P."/>
            <person name="McDonald L.A."/>
            <person name="Utterback T.R."/>
            <person name="Fleischmann R.D."/>
            <person name="Nierman W.C."/>
            <person name="White O."/>
            <person name="Salzberg S.L."/>
            <person name="Smith H.O."/>
            <person name="Colwell R.R."/>
            <person name="Mekalanos J.J."/>
            <person name="Venter J.C."/>
            <person name="Fraser C.M."/>
        </authorList>
    </citation>
    <scope>NUCLEOTIDE SEQUENCE [LARGE SCALE GENOMIC DNA]</scope>
    <source>
        <strain>ATCC 39315 / El Tor Inaba N16961</strain>
    </source>
</reference>
<dbReference type="EMBL" id="AE003852">
    <property type="protein sequence ID" value="AAF94447.1"/>
    <property type="molecule type" value="Genomic_DNA"/>
</dbReference>
<dbReference type="PIR" id="C82218">
    <property type="entry name" value="C82218"/>
</dbReference>
<dbReference type="RefSeq" id="NP_230933.1">
    <property type="nucleotide sequence ID" value="NC_002505.1"/>
</dbReference>
<dbReference type="RefSeq" id="WP_000621906.1">
    <property type="nucleotide sequence ID" value="NZ_LT906614.1"/>
</dbReference>
<dbReference type="SMR" id="Q9KSG8"/>
<dbReference type="STRING" id="243277.VC_1288"/>
<dbReference type="DNASU" id="2614742"/>
<dbReference type="EnsemblBacteria" id="AAF94447">
    <property type="protein sequence ID" value="AAF94447"/>
    <property type="gene ID" value="VC_1288"/>
</dbReference>
<dbReference type="KEGG" id="vch:VC_1288"/>
<dbReference type="PATRIC" id="fig|243277.26.peg.1227"/>
<dbReference type="eggNOG" id="COG3131">
    <property type="taxonomic scope" value="Bacteria"/>
</dbReference>
<dbReference type="HOGENOM" id="CLU_023403_2_0_6"/>
<dbReference type="UniPathway" id="UPA00637"/>
<dbReference type="Proteomes" id="UP000000584">
    <property type="component" value="Chromosome 1"/>
</dbReference>
<dbReference type="GO" id="GO:0030288">
    <property type="term" value="C:outer membrane-bounded periplasmic space"/>
    <property type="evidence" value="ECO:0000318"/>
    <property type="project" value="GO_Central"/>
</dbReference>
<dbReference type="GO" id="GO:0030246">
    <property type="term" value="F:carbohydrate binding"/>
    <property type="evidence" value="ECO:0007669"/>
    <property type="project" value="InterPro"/>
</dbReference>
<dbReference type="GO" id="GO:0003824">
    <property type="term" value="F:catalytic activity"/>
    <property type="evidence" value="ECO:0007669"/>
    <property type="project" value="InterPro"/>
</dbReference>
<dbReference type="GO" id="GO:0051274">
    <property type="term" value="P:beta-glucan biosynthetic process"/>
    <property type="evidence" value="ECO:0000318"/>
    <property type="project" value="GO_Central"/>
</dbReference>
<dbReference type="FunFam" id="2.60.40.10:FF:001915">
    <property type="entry name" value="Glucans biosynthesis protein G"/>
    <property type="match status" value="1"/>
</dbReference>
<dbReference type="FunFam" id="2.70.98.10:FF:000001">
    <property type="entry name" value="Glucans biosynthesis protein G"/>
    <property type="match status" value="1"/>
</dbReference>
<dbReference type="Gene3D" id="2.70.98.10">
    <property type="match status" value="1"/>
</dbReference>
<dbReference type="Gene3D" id="2.60.40.10">
    <property type="entry name" value="Immunoglobulins"/>
    <property type="match status" value="1"/>
</dbReference>
<dbReference type="HAMAP" id="MF_01069">
    <property type="entry name" value="MdoG_OpgG"/>
    <property type="match status" value="1"/>
</dbReference>
<dbReference type="InterPro" id="IPR011013">
    <property type="entry name" value="Gal_mutarotase_sf_dom"/>
</dbReference>
<dbReference type="InterPro" id="IPR014718">
    <property type="entry name" value="GH-type_carb-bd"/>
</dbReference>
<dbReference type="InterPro" id="IPR014438">
    <property type="entry name" value="Glucan_biosyn_MdoG/MdoD"/>
</dbReference>
<dbReference type="InterPro" id="IPR007444">
    <property type="entry name" value="Glucan_biosyn_MdoG_C"/>
</dbReference>
<dbReference type="InterPro" id="IPR013783">
    <property type="entry name" value="Ig-like_fold"/>
</dbReference>
<dbReference type="InterPro" id="IPR014756">
    <property type="entry name" value="Ig_E-set"/>
</dbReference>
<dbReference type="InterPro" id="IPR023704">
    <property type="entry name" value="MdoG_OpgG"/>
</dbReference>
<dbReference type="PANTHER" id="PTHR30504">
    <property type="entry name" value="GLUCANS BIOSYNTHESIS PROTEIN"/>
    <property type="match status" value="1"/>
</dbReference>
<dbReference type="PANTHER" id="PTHR30504:SF2">
    <property type="entry name" value="GLUCANS BIOSYNTHESIS PROTEIN G"/>
    <property type="match status" value="1"/>
</dbReference>
<dbReference type="Pfam" id="PF04349">
    <property type="entry name" value="MdoG"/>
    <property type="match status" value="1"/>
</dbReference>
<dbReference type="PIRSF" id="PIRSF006281">
    <property type="entry name" value="MdoG"/>
    <property type="match status" value="1"/>
</dbReference>
<dbReference type="SUPFAM" id="SSF81296">
    <property type="entry name" value="E set domains"/>
    <property type="match status" value="1"/>
</dbReference>
<dbReference type="SUPFAM" id="SSF74650">
    <property type="entry name" value="Galactose mutarotase-like"/>
    <property type="match status" value="1"/>
</dbReference>
<gene>
    <name type="primary">opgG</name>
    <name type="ordered locus">VC_1288</name>
</gene>
<organism>
    <name type="scientific">Vibrio cholerae serotype O1 (strain ATCC 39315 / El Tor Inaba N16961)</name>
    <dbReference type="NCBI Taxonomy" id="243277"/>
    <lineage>
        <taxon>Bacteria</taxon>
        <taxon>Pseudomonadati</taxon>
        <taxon>Pseudomonadota</taxon>
        <taxon>Gammaproteobacteria</taxon>
        <taxon>Vibrionales</taxon>
        <taxon>Vibrionaceae</taxon>
        <taxon>Vibrio</taxon>
    </lineage>
</organism>
<sequence length="545" mass="60874">MIRVSSAVQRHAQKLIVLFSLLFGASLLMSDNGFATDIKNTNASSPVNSESTKPTKAGEVKNVVRFAKTGSFDNDTVVRLARQLAKKPYVALKDPLPESLANISYDEYRDIRFKPDSAVWKADGLPYQMQLFHRGFFFQDLIEIALVEGNQATHLSYDPNMFTAGEVLQQNLPTEDIGYSGLRVHYPLNSPSYFDELFVFQGASYFRALGKGNAYGLSARGLAIKTADPAGEEFPIFRAFWVEKPNYDTNLIVVHALLDSPSVSGAYRFSIRPGENTRMDVEAVLFPRVELSKVGLAPATSMFMHSPNGREKTDDFRPSVHDSDGLLMINGRGERLWRPLANPSTLQVSAFMDNSPQGFGLMQRERDYANYQDLEAHYEKRPSLWVEPVGNWGPGAVVLTEIPTQSEIHDNIVAFWKPAQPLAAGSEYRFSYHLNWGAQPEANPQAITVSRTASGRADIAKPTPKRLFVIDYQVQGAKPAQMPEPKVRSNAGVISNVVLRDNPANNGYRLSFEFDPGEVTLAELRAELTLQEARPVETWLYRWTL</sequence>
<comment type="function">
    <text evidence="1">Involved in the biosynthesis of osmoregulated periplasmic glucans (OPGs).</text>
</comment>
<comment type="pathway">
    <text>Glycan metabolism; osmoregulated periplasmic glucan (OPG) biosynthesis.</text>
</comment>
<comment type="subcellular location">
    <subcellularLocation>
        <location evidence="1">Periplasm</location>
    </subcellularLocation>
</comment>
<comment type="similarity">
    <text evidence="3">Belongs to the OpgD/OpgG family.</text>
</comment>
<name>OPGG_VIBCH</name>
<keyword id="KW-0574">Periplasm</keyword>
<keyword id="KW-1185">Reference proteome</keyword>
<keyword id="KW-0732">Signal</keyword>
<accession>Q9KSG8</accession>
<evidence type="ECO:0000250" key="1"/>
<evidence type="ECO:0000255" key="2"/>
<evidence type="ECO:0000305" key="3"/>
<feature type="signal peptide" evidence="2">
    <location>
        <begin position="1"/>
        <end position="35"/>
    </location>
</feature>
<feature type="chain" id="PRO_0000020237" description="Glucans biosynthesis protein G">
    <location>
        <begin position="36"/>
        <end position="545"/>
    </location>
</feature>